<feature type="chain" id="PRO_0000212586" description="Natural resistance-associated macrophage protein 1">
    <location>
        <begin position="1"/>
        <end position="547"/>
    </location>
</feature>
<feature type="topological domain" description="Cytoplasmic" evidence="2">
    <location>
        <begin position="1"/>
        <end position="54"/>
    </location>
</feature>
<feature type="transmembrane region" description="Helical" evidence="2">
    <location>
        <begin position="55"/>
        <end position="75"/>
    </location>
</feature>
<feature type="topological domain" description="Extracellular" evidence="2">
    <location>
        <begin position="76"/>
        <end position="81"/>
    </location>
</feature>
<feature type="transmembrane region" description="Helical" evidence="2">
    <location>
        <begin position="82"/>
        <end position="102"/>
    </location>
</feature>
<feature type="topological domain" description="Cytoplasmic" evidence="2">
    <location>
        <begin position="103"/>
        <end position="139"/>
    </location>
</feature>
<feature type="transmembrane region" description="Helical" evidence="2">
    <location>
        <begin position="140"/>
        <end position="160"/>
    </location>
</feature>
<feature type="topological domain" description="Extracellular" evidence="2">
    <location>
        <begin position="161"/>
        <end position="164"/>
    </location>
</feature>
<feature type="transmembrane region" description="Helical" evidence="2">
    <location>
        <begin position="165"/>
        <end position="185"/>
    </location>
</feature>
<feature type="topological domain" description="Cytoplasmic" evidence="2">
    <location>
        <begin position="186"/>
        <end position="193"/>
    </location>
</feature>
<feature type="transmembrane region" description="Helical" evidence="2">
    <location>
        <begin position="194"/>
        <end position="214"/>
    </location>
</feature>
<feature type="topological domain" description="Extracellular" evidence="2">
    <location>
        <begin position="215"/>
        <end position="240"/>
    </location>
</feature>
<feature type="transmembrane region" description="Helical" evidence="2">
    <location>
        <begin position="241"/>
        <end position="261"/>
    </location>
</feature>
<feature type="topological domain" description="Cytoplasmic" evidence="2">
    <location>
        <begin position="262"/>
        <end position="286"/>
    </location>
</feature>
<feature type="transmembrane region" description="Helical" evidence="2">
    <location>
        <begin position="287"/>
        <end position="307"/>
    </location>
</feature>
<feature type="topological domain" description="Extracellular" evidence="2">
    <location>
        <begin position="308"/>
        <end position="346"/>
    </location>
</feature>
<feature type="transmembrane region" description="Helical" evidence="2">
    <location>
        <begin position="347"/>
        <end position="367"/>
    </location>
</feature>
<feature type="topological domain" description="Cytoplasmic" evidence="2">
    <location>
        <begin position="368"/>
        <end position="394"/>
    </location>
</feature>
<feature type="transmembrane region" description="Helical" evidence="2">
    <location>
        <begin position="395"/>
        <end position="415"/>
    </location>
</feature>
<feature type="topological domain" description="Extracellular" evidence="2">
    <location>
        <begin position="416"/>
        <end position="432"/>
    </location>
</feature>
<feature type="transmembrane region" description="Helical" evidence="2">
    <location>
        <begin position="433"/>
        <end position="453"/>
    </location>
</feature>
<feature type="topological domain" description="Cytoplasmic" evidence="2">
    <location>
        <begin position="454"/>
        <end position="464"/>
    </location>
</feature>
<feature type="transmembrane region" description="Helical" evidence="2">
    <location>
        <begin position="465"/>
        <end position="485"/>
    </location>
</feature>
<feature type="topological domain" description="Extracellular" evidence="2">
    <location>
        <begin position="486"/>
        <end position="492"/>
    </location>
</feature>
<feature type="transmembrane region" description="Helical" evidence="2">
    <location>
        <begin position="493"/>
        <end position="513"/>
    </location>
</feature>
<feature type="topological domain" description="Cytoplasmic" evidence="2">
    <location>
        <begin position="514"/>
        <end position="547"/>
    </location>
</feature>
<feature type="region of interest" description="Disordered" evidence="3">
    <location>
        <begin position="1"/>
        <end position="30"/>
    </location>
</feature>
<feature type="compositionally biased region" description="Polar residues" evidence="3">
    <location>
        <begin position="8"/>
        <end position="17"/>
    </location>
</feature>
<feature type="compositionally biased region" description="Low complexity" evidence="3">
    <location>
        <begin position="21"/>
        <end position="30"/>
    </location>
</feature>
<feature type="glycosylation site" description="N-linked (GlcNAc...) asparagine" evidence="2">
    <location>
        <position position="321"/>
    </location>
</feature>
<feature type="glycosylation site" description="N-linked (GlcNAc...) asparagine" evidence="2">
    <location>
        <position position="335"/>
    </location>
</feature>
<feature type="sequence variant" evidence="4">
    <original>F</original>
    <variation>L</variation>
    <location>
        <position position="58"/>
    </location>
</feature>
<feature type="sequence variant" evidence="4">
    <original>F</original>
    <variation>S</variation>
    <location>
        <position position="180"/>
    </location>
</feature>
<feature type="sequence variant" evidence="4">
    <original>S</original>
    <variation>N</variation>
    <location>
        <position position="323"/>
    </location>
</feature>
<feature type="sequence variant" evidence="4 5">
    <original>V</original>
    <variation>A</variation>
    <location>
        <position position="413"/>
    </location>
</feature>
<feature type="sequence variant" evidence="4">
    <original>I</original>
    <variation>T</variation>
    <location>
        <position position="476"/>
    </location>
</feature>
<reference evidence="6" key="1">
    <citation type="journal article" date="2002" name="Infect. Immun.">
        <title>Mapping and sequencing of the canine NRAMP1 gene and identification of mutations in leishmaniasis-susceptible dogs.</title>
        <authorList>
            <person name="Altet L."/>
            <person name="Francino O."/>
            <person name="Solano-Gallego L."/>
            <person name="Renier C."/>
            <person name="Sanchez A."/>
        </authorList>
    </citation>
    <scope>NUCLEOTIDE SEQUENCE [GENOMIC DNA]</scope>
    <scope>VARIANTS LEU-58; SER-180; ASN-323; ALA-413 AND THR-476</scope>
</reference>
<reference key="2">
    <citation type="submission" date="2006-06" db="EMBL/GenBank/DDBJ databases">
        <title>Canine Nramp1 and visceral leishmaniasis.</title>
        <authorList>
            <person name="Bueno R."/>
            <person name="Santos D.N."/>
            <person name="Melo M.N."/>
            <person name="Santos R.L."/>
        </authorList>
    </citation>
    <scope>NUCLEOTIDE SEQUENCE [MRNA]</scope>
    <scope>VARIANT ALA-413</scope>
</reference>
<comment type="function">
    <text evidence="1">Macrophage-specific antiporter that fluxes metal ions in either direction against a proton gradient. Localized to late endosomal lysosomal membranes, delivers bivalent cations from the cytosol into these acidic compartments where they may directly affect antimicrobial activity. Involved in iron metabolism and host natural resistance to infection with intracellular parasites. Pathogen resistance involves sequestration of Fe(2+) and Mn(2+), cofactors of both prokaryotic and eukaryotic catalases and superoxide dismutases, not only to protect the macrophage against its own generation of reactive oxygen species, but to deny the cations to the pathogen for synthesis of its protective enzymes.</text>
</comment>
<comment type="catalytic activity">
    <reaction evidence="1">
        <text>Zn(2+)(in) + H(+)(out) = Zn(2+)(out) + H(+)(in)</text>
        <dbReference type="Rhea" id="RHEA:28839"/>
        <dbReference type="ChEBI" id="CHEBI:15378"/>
        <dbReference type="ChEBI" id="CHEBI:29105"/>
    </reaction>
</comment>
<comment type="catalytic activity">
    <reaction evidence="1">
        <text>Fe(2+)(in) + H(+)(out) = Fe(2+)(out) + H(+)(in)</text>
        <dbReference type="Rhea" id="RHEA:29439"/>
        <dbReference type="ChEBI" id="CHEBI:15378"/>
        <dbReference type="ChEBI" id="CHEBI:29033"/>
    </reaction>
</comment>
<comment type="catalytic activity">
    <reaction evidence="1">
        <text>Mn(2+)(in) + H(+)(out) = Mn(2+)(out) + H(+)(in)</text>
        <dbReference type="Rhea" id="RHEA:73063"/>
        <dbReference type="ChEBI" id="CHEBI:15378"/>
        <dbReference type="ChEBI" id="CHEBI:29035"/>
    </reaction>
</comment>
<comment type="subcellular location">
    <subcellularLocation>
        <location evidence="1">Late endosome membrane</location>
        <topology evidence="2">Multi-pass membrane protein</topology>
    </subcellularLocation>
    <subcellularLocation>
        <location evidence="1">Lysosome membrane</location>
        <topology evidence="2">Multi-pass membrane protein</topology>
    </subcellularLocation>
</comment>
<comment type="similarity">
    <text evidence="1">Belongs to the NRAMP family.</text>
</comment>
<name>NRAM1_CANLF</name>
<organism evidence="7">
    <name type="scientific">Canis lupus familiaris</name>
    <name type="common">Dog</name>
    <name type="synonym">Canis familiaris</name>
    <dbReference type="NCBI Taxonomy" id="9615"/>
    <lineage>
        <taxon>Eukaryota</taxon>
        <taxon>Metazoa</taxon>
        <taxon>Chordata</taxon>
        <taxon>Craniata</taxon>
        <taxon>Vertebrata</taxon>
        <taxon>Euteleostomi</taxon>
        <taxon>Mammalia</taxon>
        <taxon>Eutheria</taxon>
        <taxon>Laurasiatheria</taxon>
        <taxon>Carnivora</taxon>
        <taxon>Caniformia</taxon>
        <taxon>Canidae</taxon>
        <taxon>Canis</taxon>
    </lineage>
</organism>
<evidence type="ECO:0000250" key="1">
    <source>
        <dbReference type="UniProtKB" id="P49279"/>
    </source>
</evidence>
<evidence type="ECO:0000255" key="2"/>
<evidence type="ECO:0000256" key="3">
    <source>
        <dbReference type="SAM" id="MobiDB-lite"/>
    </source>
</evidence>
<evidence type="ECO:0000269" key="4">
    <source>
    </source>
</evidence>
<evidence type="ECO:0000269" key="5">
    <source ref="2"/>
</evidence>
<evidence type="ECO:0000305" key="6"/>
<evidence type="ECO:0000312" key="7">
    <source>
        <dbReference type="EMBL" id="AAD37483.2"/>
    </source>
</evidence>
<sequence>MTGDKDPQSVSRPNYGSISHPPSSEPQQEPLRTTYLSEKIPIPDTEPGTFSLRKLWAFTGPGFLMSIAFLDPGNIESDLQAGAVAGFKLLWVLLWATVLGLLCQRLAARLGVVTGKDLGEICHLYYPKVPRTLLWLTIELAIVGSDMQEVIGTAIAFSLLSAGRIPLWGGVLITIVDTFFFLFLDNYGLRKLEAFFGILITIMALTFGYEYVVARPAQVALLQGLLLPSCPGCGRPELLQAVGIVGAIIMPHNIYLHSALVKSREIDRSRRPDIREANMYFLIEASIALSVSFFINLFVVAVFGQAFYQQTNEAAFNVCANSSLHDYAKIFPRNNLTVEVDIYQGGVMLGCVFGPAALYIWAVGLLAAGQSSTMTGTYAGQFVMEGFLRLRWSRFARVLLTRSCAILPTVLVVVFRDLKDLSGLNDLLNVLQSLLLPFAVLPILTFTSMPALMQEFANGRLSKAITSFIMALVCAINLYFVVIYLPSLPHPAYFILVALLAIVYLGLTTYLVWTCFIAHGVTLLAHSSHQHFLYGLPDVEEKGKISG</sequence>
<gene>
    <name type="primary">SLC11A1</name>
    <name type="synonym">NRAMP1</name>
</gene>
<protein>
    <recommendedName>
        <fullName>Natural resistance-associated macrophage protein 1</fullName>
        <shortName>NRAMP 1</shortName>
    </recommendedName>
    <alternativeName>
        <fullName>Solute carrier family 11 member 1</fullName>
    </alternativeName>
</protein>
<accession>Q9XT74</accession>
<accession>Q0PPT4</accession>
<dbReference type="EMBL" id="AF091049">
    <property type="protein sequence ID" value="AAD37483.2"/>
    <property type="molecule type" value="Genomic_DNA"/>
</dbReference>
<dbReference type="EMBL" id="DQ784645">
    <property type="protein sequence ID" value="ABG78262.1"/>
    <property type="molecule type" value="mRNA"/>
</dbReference>
<dbReference type="RefSeq" id="NP_001013873.1">
    <property type="nucleotide sequence ID" value="NM_001013851.1"/>
</dbReference>
<dbReference type="SMR" id="Q9XT74"/>
<dbReference type="FunCoup" id="Q9XT74">
    <property type="interactions" value="520"/>
</dbReference>
<dbReference type="STRING" id="9615.ENSCAFP00000021599"/>
<dbReference type="GlyCosmos" id="Q9XT74">
    <property type="glycosylation" value="2 sites, No reported glycans"/>
</dbReference>
<dbReference type="PaxDb" id="9612-ENSCAFP00000021599"/>
<dbReference type="GeneID" id="478909"/>
<dbReference type="KEGG" id="cfa:478909"/>
<dbReference type="CTD" id="6556"/>
<dbReference type="eggNOG" id="KOG1291">
    <property type="taxonomic scope" value="Eukaryota"/>
</dbReference>
<dbReference type="InParanoid" id="Q9XT74"/>
<dbReference type="OrthoDB" id="409173at2759"/>
<dbReference type="Proteomes" id="UP000002254">
    <property type="component" value="Unplaced"/>
</dbReference>
<dbReference type="Proteomes" id="UP000694429">
    <property type="component" value="Unplaced"/>
</dbReference>
<dbReference type="Proteomes" id="UP000694542">
    <property type="component" value="Unplaced"/>
</dbReference>
<dbReference type="Proteomes" id="UP000805418">
    <property type="component" value="Unplaced"/>
</dbReference>
<dbReference type="GO" id="GO:0010008">
    <property type="term" value="C:endosome membrane"/>
    <property type="evidence" value="ECO:0000318"/>
    <property type="project" value="GO_Central"/>
</dbReference>
<dbReference type="GO" id="GO:0031902">
    <property type="term" value="C:late endosome membrane"/>
    <property type="evidence" value="ECO:0007669"/>
    <property type="project" value="UniProtKB-SubCell"/>
</dbReference>
<dbReference type="GO" id="GO:0005765">
    <property type="term" value="C:lysosomal membrane"/>
    <property type="evidence" value="ECO:0000318"/>
    <property type="project" value="GO_Central"/>
</dbReference>
<dbReference type="GO" id="GO:0016020">
    <property type="term" value="C:membrane"/>
    <property type="evidence" value="ECO:0000303"/>
    <property type="project" value="UniProtKB"/>
</dbReference>
<dbReference type="GO" id="GO:0030670">
    <property type="term" value="C:phagocytic vesicle membrane"/>
    <property type="evidence" value="ECO:0000318"/>
    <property type="project" value="GO_Central"/>
</dbReference>
<dbReference type="GO" id="GO:0005886">
    <property type="term" value="C:plasma membrane"/>
    <property type="evidence" value="ECO:0000318"/>
    <property type="project" value="GO_Central"/>
</dbReference>
<dbReference type="GO" id="GO:0015086">
    <property type="term" value="F:cadmium ion transmembrane transporter activity"/>
    <property type="evidence" value="ECO:0000318"/>
    <property type="project" value="GO_Central"/>
</dbReference>
<dbReference type="GO" id="GO:0005381">
    <property type="term" value="F:iron ion transmembrane transporter activity"/>
    <property type="evidence" value="ECO:0000250"/>
    <property type="project" value="UniProtKB"/>
</dbReference>
<dbReference type="GO" id="GO:0005384">
    <property type="term" value="F:manganese ion transmembrane transporter activity"/>
    <property type="evidence" value="ECO:0000250"/>
    <property type="project" value="UniProtKB"/>
</dbReference>
<dbReference type="GO" id="GO:0051139">
    <property type="term" value="F:metal cation:proton antiporter activity"/>
    <property type="evidence" value="ECO:0000250"/>
    <property type="project" value="UniProtKB"/>
</dbReference>
<dbReference type="GO" id="GO:0034755">
    <property type="term" value="P:iron ion transmembrane transport"/>
    <property type="evidence" value="ECO:0000318"/>
    <property type="project" value="GO_Central"/>
</dbReference>
<dbReference type="GO" id="GO:0006826">
    <property type="term" value="P:iron ion transport"/>
    <property type="evidence" value="ECO:0000250"/>
    <property type="project" value="UniProtKB"/>
</dbReference>
<dbReference type="GO" id="GO:0006828">
    <property type="term" value="P:manganese ion transport"/>
    <property type="evidence" value="ECO:0000250"/>
    <property type="project" value="UniProtKB"/>
</dbReference>
<dbReference type="HAMAP" id="MF_00221">
    <property type="entry name" value="NRAMP"/>
    <property type="match status" value="1"/>
</dbReference>
<dbReference type="InterPro" id="IPR001046">
    <property type="entry name" value="NRAMP_fam"/>
</dbReference>
<dbReference type="NCBIfam" id="TIGR01197">
    <property type="entry name" value="nramp"/>
    <property type="match status" value="1"/>
</dbReference>
<dbReference type="NCBIfam" id="NF037982">
    <property type="entry name" value="Nramp_1"/>
    <property type="match status" value="1"/>
</dbReference>
<dbReference type="PANTHER" id="PTHR11706:SF52">
    <property type="entry name" value="NATURAL RESISTANCE-ASSOCIATED MACROPHAGE PROTEIN 1"/>
    <property type="match status" value="1"/>
</dbReference>
<dbReference type="PANTHER" id="PTHR11706">
    <property type="entry name" value="SOLUTE CARRIER PROTEIN FAMILY 11 MEMBER"/>
    <property type="match status" value="1"/>
</dbReference>
<dbReference type="Pfam" id="PF01566">
    <property type="entry name" value="Nramp"/>
    <property type="match status" value="1"/>
</dbReference>
<dbReference type="PRINTS" id="PR00447">
    <property type="entry name" value="NATRESASSCMP"/>
</dbReference>
<proteinExistence type="evidence at transcript level"/>
<keyword id="KW-0967">Endosome</keyword>
<keyword id="KW-0325">Glycoprotein</keyword>
<keyword id="KW-0406">Ion transport</keyword>
<keyword id="KW-0408">Iron</keyword>
<keyword id="KW-0410">Iron transport</keyword>
<keyword id="KW-0458">Lysosome</keyword>
<keyword id="KW-0472">Membrane</keyword>
<keyword id="KW-1185">Reference proteome</keyword>
<keyword id="KW-0812">Transmembrane</keyword>
<keyword id="KW-1133">Transmembrane helix</keyword>
<keyword id="KW-0813">Transport</keyword>